<reference key="1">
    <citation type="journal article" date="2007" name="J. Bacteriol.">
        <title>The complete genome sequence of the lactic acid bacterial paradigm Lactococcus lactis subsp. cremoris MG1363.</title>
        <authorList>
            <person name="Wegmann U."/>
            <person name="O'Connell-Motherway M."/>
            <person name="Zomer A."/>
            <person name="Buist G."/>
            <person name="Shearman C."/>
            <person name="Canchaya C."/>
            <person name="Ventura M."/>
            <person name="Goesmann A."/>
            <person name="Gasson M.J."/>
            <person name="Kuipers O.P."/>
            <person name="van Sinderen D."/>
            <person name="Kok J."/>
        </authorList>
    </citation>
    <scope>NUCLEOTIDE SEQUENCE [LARGE SCALE GENOMIC DNA]</scope>
    <source>
        <strain>MG1363</strain>
    </source>
</reference>
<name>MTLD_LACLM</name>
<protein>
    <recommendedName>
        <fullName evidence="1">Mannitol-1-phosphate 5-dehydrogenase</fullName>
        <ecNumber evidence="1">1.1.1.17</ecNumber>
    </recommendedName>
</protein>
<evidence type="ECO:0000255" key="1">
    <source>
        <dbReference type="HAMAP-Rule" id="MF_00196"/>
    </source>
</evidence>
<feature type="chain" id="PRO_1000011803" description="Mannitol-1-phosphate 5-dehydrogenase">
    <location>
        <begin position="1"/>
        <end position="388"/>
    </location>
</feature>
<feature type="binding site" evidence="1">
    <location>
        <begin position="4"/>
        <end position="15"/>
    </location>
    <ligand>
        <name>NAD(+)</name>
        <dbReference type="ChEBI" id="CHEBI:57540"/>
    </ligand>
</feature>
<sequence>MKKAVHFGAGNIGRGFIGEILSKNGFEIYFVDTNKAIIDELNTRHSYEIGIASSSPEKISVSGVFGINNGENPKDVIEAIAQADIVTTAIGPNILPYIAELVAKGIQKRKEENKQVQIDIIACENMIGGSEFLEKKVAEYLSDSDKVYLANYIGFPNAAVDRIVPGQKHEDLLYVEVEPFCEWVIDESQIKNKSFKLEGVHYASNLEPFIERKLFSVNSGHATVAYSSAYKGYKTILEGLQHKEILSALKGVQKETRALLLAKWPQYFTEEDLMSYHQMIISRFANPKIIDEVTRVARTPIRKLGYDERFIRPIRELNERGLSYQNHLDIVGKIFAYQDENDSQSVQLQEKLSTMDFQRLIEEVTGLSNKKIILEIELVIKKYKNDSK</sequence>
<organism>
    <name type="scientific">Lactococcus lactis subsp. cremoris (strain MG1363)</name>
    <dbReference type="NCBI Taxonomy" id="416870"/>
    <lineage>
        <taxon>Bacteria</taxon>
        <taxon>Bacillati</taxon>
        <taxon>Bacillota</taxon>
        <taxon>Bacilli</taxon>
        <taxon>Lactobacillales</taxon>
        <taxon>Streptococcaceae</taxon>
        <taxon>Lactococcus</taxon>
        <taxon>Lactococcus cremoris subsp. cremoris</taxon>
    </lineage>
</organism>
<keyword id="KW-0520">NAD</keyword>
<keyword id="KW-0560">Oxidoreductase</keyword>
<gene>
    <name evidence="1" type="primary">mtlD</name>
    <name type="ordered locus">llmg_0025</name>
</gene>
<accession>A2RH97</accession>
<proteinExistence type="inferred from homology"/>
<comment type="catalytic activity">
    <reaction evidence="1">
        <text>D-mannitol 1-phosphate + NAD(+) = beta-D-fructose 6-phosphate + NADH + H(+)</text>
        <dbReference type="Rhea" id="RHEA:19661"/>
        <dbReference type="ChEBI" id="CHEBI:15378"/>
        <dbReference type="ChEBI" id="CHEBI:57540"/>
        <dbReference type="ChEBI" id="CHEBI:57634"/>
        <dbReference type="ChEBI" id="CHEBI:57945"/>
        <dbReference type="ChEBI" id="CHEBI:61381"/>
        <dbReference type="EC" id="1.1.1.17"/>
    </reaction>
</comment>
<comment type="similarity">
    <text evidence="1">Belongs to the mannitol dehydrogenase family.</text>
</comment>
<dbReference type="EC" id="1.1.1.17" evidence="1"/>
<dbReference type="EMBL" id="AM406671">
    <property type="protein sequence ID" value="CAL96633.1"/>
    <property type="molecule type" value="Genomic_DNA"/>
</dbReference>
<dbReference type="RefSeq" id="WP_011834137.1">
    <property type="nucleotide sequence ID" value="NC_009004.1"/>
</dbReference>
<dbReference type="SMR" id="A2RH97"/>
<dbReference type="STRING" id="416870.llmg_0025"/>
<dbReference type="KEGG" id="llm:llmg_0025"/>
<dbReference type="eggNOG" id="COG0246">
    <property type="taxonomic scope" value="Bacteria"/>
</dbReference>
<dbReference type="HOGENOM" id="CLU_036089_2_0_9"/>
<dbReference type="OrthoDB" id="271711at2"/>
<dbReference type="PhylomeDB" id="A2RH97"/>
<dbReference type="Proteomes" id="UP000000364">
    <property type="component" value="Chromosome"/>
</dbReference>
<dbReference type="GO" id="GO:0005829">
    <property type="term" value="C:cytosol"/>
    <property type="evidence" value="ECO:0007669"/>
    <property type="project" value="TreeGrafter"/>
</dbReference>
<dbReference type="GO" id="GO:0008926">
    <property type="term" value="F:mannitol-1-phosphate 5-dehydrogenase activity"/>
    <property type="evidence" value="ECO:0007669"/>
    <property type="project" value="UniProtKB-UniRule"/>
</dbReference>
<dbReference type="GO" id="GO:0019592">
    <property type="term" value="P:mannitol catabolic process"/>
    <property type="evidence" value="ECO:0007669"/>
    <property type="project" value="TreeGrafter"/>
</dbReference>
<dbReference type="Gene3D" id="1.10.1040.10">
    <property type="entry name" value="N-(1-d-carboxylethyl)-l-norvaline Dehydrogenase, domain 2"/>
    <property type="match status" value="1"/>
</dbReference>
<dbReference type="Gene3D" id="3.40.50.720">
    <property type="entry name" value="NAD(P)-binding Rossmann-like Domain"/>
    <property type="match status" value="1"/>
</dbReference>
<dbReference type="HAMAP" id="MF_00196">
    <property type="entry name" value="Mannitol_dehydrog"/>
    <property type="match status" value="1"/>
</dbReference>
<dbReference type="InterPro" id="IPR008927">
    <property type="entry name" value="6-PGluconate_DH-like_C_sf"/>
</dbReference>
<dbReference type="InterPro" id="IPR013328">
    <property type="entry name" value="6PGD_dom2"/>
</dbReference>
<dbReference type="InterPro" id="IPR023028">
    <property type="entry name" value="Mannitol_1_phos_5_DH"/>
</dbReference>
<dbReference type="InterPro" id="IPR000669">
    <property type="entry name" value="Mannitol_DH"/>
</dbReference>
<dbReference type="InterPro" id="IPR013118">
    <property type="entry name" value="Mannitol_DH_C"/>
</dbReference>
<dbReference type="InterPro" id="IPR023027">
    <property type="entry name" value="Mannitol_DH_CS"/>
</dbReference>
<dbReference type="InterPro" id="IPR013131">
    <property type="entry name" value="Mannitol_DH_N"/>
</dbReference>
<dbReference type="InterPro" id="IPR036291">
    <property type="entry name" value="NAD(P)-bd_dom_sf"/>
</dbReference>
<dbReference type="NCBIfam" id="NF002647">
    <property type="entry name" value="PRK02318.1-3"/>
    <property type="match status" value="1"/>
</dbReference>
<dbReference type="NCBIfam" id="NF002652">
    <property type="entry name" value="PRK02318.2-5"/>
    <property type="match status" value="1"/>
</dbReference>
<dbReference type="PANTHER" id="PTHR30524:SF0">
    <property type="entry name" value="ALTRONATE OXIDOREDUCTASE-RELATED"/>
    <property type="match status" value="1"/>
</dbReference>
<dbReference type="PANTHER" id="PTHR30524">
    <property type="entry name" value="MANNITOL-1-PHOSPHATE 5-DEHYDROGENASE"/>
    <property type="match status" value="1"/>
</dbReference>
<dbReference type="Pfam" id="PF01232">
    <property type="entry name" value="Mannitol_dh"/>
    <property type="match status" value="1"/>
</dbReference>
<dbReference type="Pfam" id="PF08125">
    <property type="entry name" value="Mannitol_dh_C"/>
    <property type="match status" value="1"/>
</dbReference>
<dbReference type="PRINTS" id="PR00084">
    <property type="entry name" value="MTLDHDRGNASE"/>
</dbReference>
<dbReference type="SUPFAM" id="SSF48179">
    <property type="entry name" value="6-phosphogluconate dehydrogenase C-terminal domain-like"/>
    <property type="match status" value="1"/>
</dbReference>
<dbReference type="SUPFAM" id="SSF51735">
    <property type="entry name" value="NAD(P)-binding Rossmann-fold domains"/>
    <property type="match status" value="1"/>
</dbReference>
<dbReference type="PROSITE" id="PS00974">
    <property type="entry name" value="MANNITOL_DHGENASE"/>
    <property type="match status" value="1"/>
</dbReference>